<evidence type="ECO:0000250" key="1">
    <source>
        <dbReference type="UniProtKB" id="E1BKH1"/>
    </source>
</evidence>
<evidence type="ECO:0000250" key="2">
    <source>
        <dbReference type="UniProtKB" id="Q5JVL4"/>
    </source>
</evidence>
<evidence type="ECO:0000255" key="3">
    <source>
        <dbReference type="PROSITE-ProRule" id="PRU00448"/>
    </source>
</evidence>
<evidence type="ECO:0000255" key="4">
    <source>
        <dbReference type="PROSITE-ProRule" id="PRU00665"/>
    </source>
</evidence>
<evidence type="ECO:0000269" key="5">
    <source>
    </source>
</evidence>
<evidence type="ECO:0000269" key="6">
    <source>
    </source>
</evidence>
<evidence type="ECO:0000269" key="7">
    <source>
    </source>
</evidence>
<evidence type="ECO:0000269" key="8">
    <source>
    </source>
</evidence>
<evidence type="ECO:0000269" key="9">
    <source>
    </source>
</evidence>
<evidence type="ECO:0007744" key="10">
    <source>
        <dbReference type="PDB" id="8I7O"/>
    </source>
</evidence>
<evidence type="ECO:0007744" key="11">
    <source>
        <dbReference type="PDB" id="8I7R"/>
    </source>
</evidence>
<evidence type="ECO:0007744" key="12">
    <source>
        <dbReference type="PDB" id="8IYJ"/>
    </source>
</evidence>
<evidence type="ECO:0007744" key="13">
    <source>
        <dbReference type="PDB" id="8TO0"/>
    </source>
</evidence>
<protein>
    <recommendedName>
        <fullName>EF-hand domain-containing protein 1</fullName>
    </recommendedName>
    <alternativeName>
        <fullName>Myoclonin-1</fullName>
    </alternativeName>
</protein>
<dbReference type="EMBL" id="AK006489">
    <property type="protein sequence ID" value="BAB24614.1"/>
    <property type="molecule type" value="mRNA"/>
</dbReference>
<dbReference type="CCDS" id="CCDS48227.1"/>
<dbReference type="RefSeq" id="NP_082250.1">
    <property type="nucleotide sequence ID" value="NM_027974.1"/>
</dbReference>
<dbReference type="PDB" id="8I7O">
    <property type="method" value="EM"/>
    <property type="resolution" value="4.50 A"/>
    <property type="chains" value="G1/G2=1-648"/>
</dbReference>
<dbReference type="PDB" id="8I7R">
    <property type="method" value="EM"/>
    <property type="resolution" value="6.50 A"/>
    <property type="chains" value="G1/G2/G3=1-648"/>
</dbReference>
<dbReference type="PDB" id="8IYJ">
    <property type="method" value="EM"/>
    <property type="resolution" value="3.50 A"/>
    <property type="chains" value="O5/O6/T/U/V=1-648"/>
</dbReference>
<dbReference type="PDB" id="8TO0">
    <property type="method" value="EM"/>
    <property type="resolution" value="7.70 A"/>
    <property type="chains" value="E1/Em/FE=1-648"/>
</dbReference>
<dbReference type="PDBsum" id="8I7O"/>
<dbReference type="PDBsum" id="8I7R"/>
<dbReference type="PDBsum" id="8IYJ"/>
<dbReference type="PDBsum" id="8TO0"/>
<dbReference type="EMDB" id="EMD-35229"/>
<dbReference type="EMDB" id="EMD-35230"/>
<dbReference type="EMDB" id="EMD-35823"/>
<dbReference type="EMDB" id="EMD-41431"/>
<dbReference type="SMR" id="Q9D9T8"/>
<dbReference type="FunCoup" id="Q9D9T8">
    <property type="interactions" value="193"/>
</dbReference>
<dbReference type="STRING" id="10090.ENSMUSP00000042343"/>
<dbReference type="GlyGen" id="Q9D9T8">
    <property type="glycosylation" value="1 site"/>
</dbReference>
<dbReference type="iPTMnet" id="Q9D9T8"/>
<dbReference type="PhosphoSitePlus" id="Q9D9T8"/>
<dbReference type="PaxDb" id="10090-ENSMUSP00000042343"/>
<dbReference type="ProteomicsDB" id="277552"/>
<dbReference type="DNASU" id="71877"/>
<dbReference type="GeneID" id="71877"/>
<dbReference type="KEGG" id="mmu:71877"/>
<dbReference type="AGR" id="MGI:1919127"/>
<dbReference type="CTD" id="114327"/>
<dbReference type="MGI" id="MGI:1919127">
    <property type="gene designation" value="Efhc1"/>
</dbReference>
<dbReference type="eggNOG" id="KOG0043">
    <property type="taxonomic scope" value="Eukaryota"/>
</dbReference>
<dbReference type="InParanoid" id="Q9D9T8"/>
<dbReference type="OrthoDB" id="10255210at2759"/>
<dbReference type="PhylomeDB" id="Q9D9T8"/>
<dbReference type="BioGRID-ORCS" id="71877">
    <property type="hits" value="1 hit in 77 CRISPR screens"/>
</dbReference>
<dbReference type="PRO" id="PR:Q9D9T8"/>
<dbReference type="Proteomes" id="UP000000589">
    <property type="component" value="Unplaced"/>
</dbReference>
<dbReference type="RNAct" id="Q9D9T8">
    <property type="molecule type" value="protein"/>
</dbReference>
<dbReference type="GO" id="GO:0160111">
    <property type="term" value="C:axonemal A tubule inner sheath"/>
    <property type="evidence" value="ECO:0000314"/>
    <property type="project" value="UniProtKB"/>
</dbReference>
<dbReference type="GO" id="GO:0005879">
    <property type="term" value="C:axonemal microtubule"/>
    <property type="evidence" value="ECO:0000250"/>
    <property type="project" value="UniProtKB"/>
</dbReference>
<dbReference type="GO" id="GO:0005930">
    <property type="term" value="C:axoneme"/>
    <property type="evidence" value="ECO:0000314"/>
    <property type="project" value="UniProtKB"/>
</dbReference>
<dbReference type="GO" id="GO:0005813">
    <property type="term" value="C:centrosome"/>
    <property type="evidence" value="ECO:0007669"/>
    <property type="project" value="UniProtKB-SubCell"/>
</dbReference>
<dbReference type="GO" id="GO:0005929">
    <property type="term" value="C:cilium"/>
    <property type="evidence" value="ECO:0000314"/>
    <property type="project" value="MGI"/>
</dbReference>
<dbReference type="GO" id="GO:0072686">
    <property type="term" value="C:mitotic spindle"/>
    <property type="evidence" value="ECO:0000250"/>
    <property type="project" value="UniProtKB"/>
</dbReference>
<dbReference type="GO" id="GO:0043025">
    <property type="term" value="C:neuronal cell body"/>
    <property type="evidence" value="ECO:0000314"/>
    <property type="project" value="UniProtKB"/>
</dbReference>
<dbReference type="GO" id="GO:0036126">
    <property type="term" value="C:sperm flagellum"/>
    <property type="evidence" value="ECO:0000314"/>
    <property type="project" value="UniProtKB"/>
</dbReference>
<dbReference type="GO" id="GO:0000922">
    <property type="term" value="C:spindle pole"/>
    <property type="evidence" value="ECO:0000250"/>
    <property type="project" value="UniProtKB"/>
</dbReference>
<dbReference type="GO" id="GO:0043014">
    <property type="term" value="F:alpha-tubulin binding"/>
    <property type="evidence" value="ECO:0000250"/>
    <property type="project" value="UniProtKB"/>
</dbReference>
<dbReference type="GO" id="GO:0005509">
    <property type="term" value="F:calcium ion binding"/>
    <property type="evidence" value="ECO:0007669"/>
    <property type="project" value="InterPro"/>
</dbReference>
<dbReference type="GO" id="GO:0030317">
    <property type="term" value="P:flagellated sperm motility"/>
    <property type="evidence" value="ECO:0000314"/>
    <property type="project" value="UniProtKB"/>
</dbReference>
<dbReference type="GO" id="GO:0006874">
    <property type="term" value="P:intracellular calcium ion homeostasis"/>
    <property type="evidence" value="ECO:0000303"/>
    <property type="project" value="UniProtKB"/>
</dbReference>
<dbReference type="GO" id="GO:0000281">
    <property type="term" value="P:mitotic cytokinesis"/>
    <property type="evidence" value="ECO:0000250"/>
    <property type="project" value="UniProtKB"/>
</dbReference>
<dbReference type="GO" id="GO:0007052">
    <property type="term" value="P:mitotic spindle organization"/>
    <property type="evidence" value="ECO:0000250"/>
    <property type="project" value="UniProtKB"/>
</dbReference>
<dbReference type="GO" id="GO:0043065">
    <property type="term" value="P:positive regulation of apoptotic process"/>
    <property type="evidence" value="ECO:0000303"/>
    <property type="project" value="UniProtKB"/>
</dbReference>
<dbReference type="GO" id="GO:0051302">
    <property type="term" value="P:regulation of cell division"/>
    <property type="evidence" value="ECO:0000250"/>
    <property type="project" value="UniProtKB"/>
</dbReference>
<dbReference type="CDD" id="cd00051">
    <property type="entry name" value="EFh"/>
    <property type="match status" value="1"/>
</dbReference>
<dbReference type="FunFam" id="2.30.29.170:FF:000002">
    <property type="entry name" value="EF-hand domain (C-terminal) containing 1"/>
    <property type="match status" value="1"/>
</dbReference>
<dbReference type="FunFam" id="2.30.29.170:FF:000003">
    <property type="entry name" value="EF-hand domain (C-terminal) containing 1"/>
    <property type="match status" value="1"/>
</dbReference>
<dbReference type="FunFam" id="1.10.238.10:FF:000204">
    <property type="entry name" value="EF-hand domain containing 1"/>
    <property type="match status" value="1"/>
</dbReference>
<dbReference type="FunFam" id="2.30.29.170:FF:000001">
    <property type="entry name" value="EF-hand domain containing 1"/>
    <property type="match status" value="1"/>
</dbReference>
<dbReference type="Gene3D" id="2.30.29.170">
    <property type="match status" value="3"/>
</dbReference>
<dbReference type="Gene3D" id="1.10.238.10">
    <property type="entry name" value="EF-hand"/>
    <property type="match status" value="1"/>
</dbReference>
<dbReference type="InterPro" id="IPR006602">
    <property type="entry name" value="DM10_dom"/>
</dbReference>
<dbReference type="InterPro" id="IPR011992">
    <property type="entry name" value="EF-hand-dom_pair"/>
</dbReference>
<dbReference type="InterPro" id="IPR002048">
    <property type="entry name" value="EF_hand_dom"/>
</dbReference>
<dbReference type="InterPro" id="IPR040193">
    <property type="entry name" value="EFHC1/EFHC2/EFHB"/>
</dbReference>
<dbReference type="PANTHER" id="PTHR12086">
    <property type="entry name" value="EF-HAND DOMAIN C-TERMINAL CONTAINING PROTEIN"/>
    <property type="match status" value="1"/>
</dbReference>
<dbReference type="PANTHER" id="PTHR12086:SF9">
    <property type="entry name" value="EF-HAND DOMAIN-CONTAINING PROTEIN 1"/>
    <property type="match status" value="1"/>
</dbReference>
<dbReference type="Pfam" id="PF06565">
    <property type="entry name" value="DM10_dom"/>
    <property type="match status" value="3"/>
</dbReference>
<dbReference type="Pfam" id="PF13499">
    <property type="entry name" value="EF-hand_7"/>
    <property type="match status" value="1"/>
</dbReference>
<dbReference type="SMART" id="SM00676">
    <property type="entry name" value="DM10"/>
    <property type="match status" value="3"/>
</dbReference>
<dbReference type="SMART" id="SM00054">
    <property type="entry name" value="EFh"/>
    <property type="match status" value="1"/>
</dbReference>
<dbReference type="SUPFAM" id="SSF47473">
    <property type="entry name" value="EF-hand"/>
    <property type="match status" value="1"/>
</dbReference>
<dbReference type="PROSITE" id="PS51336">
    <property type="entry name" value="DM10"/>
    <property type="match status" value="3"/>
</dbReference>
<dbReference type="PROSITE" id="PS50222">
    <property type="entry name" value="EF_HAND_2"/>
    <property type="match status" value="1"/>
</dbReference>
<name>EFHC1_MOUSE</name>
<gene>
    <name type="primary">Efhc1</name>
</gene>
<organism>
    <name type="scientific">Mus musculus</name>
    <name type="common">Mouse</name>
    <dbReference type="NCBI Taxonomy" id="10090"/>
    <lineage>
        <taxon>Eukaryota</taxon>
        <taxon>Metazoa</taxon>
        <taxon>Chordata</taxon>
        <taxon>Craniata</taxon>
        <taxon>Vertebrata</taxon>
        <taxon>Euteleostomi</taxon>
        <taxon>Mammalia</taxon>
        <taxon>Eutheria</taxon>
        <taxon>Euarchontoglires</taxon>
        <taxon>Glires</taxon>
        <taxon>Rodentia</taxon>
        <taxon>Myomorpha</taxon>
        <taxon>Muroidea</taxon>
        <taxon>Muridae</taxon>
        <taxon>Murinae</taxon>
        <taxon>Mus</taxon>
        <taxon>Mus</taxon>
    </lineage>
</organism>
<accession>Q9D9T8</accession>
<sequence>MGTNPVHGLPFLPGSSFTDSTKTAFHRSQTLNYRNGYAVVRRPTMGIGGDRLHYNQLSQAELDELANKAPILTYGPLKQAPLAEFVPAHVAFDKKVLKFSAYFQEDVPISMEEHYRIRHVNIYYYLEDDSMSVIEPVVENSGIPQGKLIKRQRFTKNDMGDHYHWKDLNRGINLTVYGKTFRIVDCDRFTQDFLESQGIELNPSEKIPLDPYTQLRKEPVRKYVTPSDFDQLKQFLTFDKQVLRFYAIWDDTDSLFGECRHYIIHYYLMDDTVEIREVHERNNGRDPFPLLMNRQRMPKVLVENAKNFPKCVLEISDQEVLEWYTAKDFIVGKPLTILGRTFFIYDCDPFTRQFYKDKFGMPDLPPVDVTKKEPPPVKQELPPYNGYGLIEDSAQNCFALIPKAPRKDVVKMLMNDNKVLRYLAALESPIPEDKDRRFVFSYFLATDMISIFEPPVRNSGIIGGKFLGRTKVVKSFSPVDNPIYYSPSDFFIGAVIEVFGHRFVILDTDEYVLKYMESNASQYSPEALASIQNRIQKPELPAPELESKQATGEPMVQGTEESKVQDLDALIDQIHMHLKYNSYKENLRETFQMYDKDESGYVDRETFFKICETLNVPVDDSLIKELIRLCTHGEGRINYYNFVRAFSN</sequence>
<keyword id="KW-0002">3D-structure</keyword>
<keyword id="KW-0966">Cell projection</keyword>
<keyword id="KW-0969">Cilium</keyword>
<keyword id="KW-0963">Cytoplasm</keyword>
<keyword id="KW-0206">Cytoskeleton</keyword>
<keyword id="KW-0282">Flagellum</keyword>
<keyword id="KW-1185">Reference proteome</keyword>
<keyword id="KW-0677">Repeat</keyword>
<feature type="chain" id="PRO_0000073878" description="EF-hand domain-containing protein 1">
    <location>
        <begin position="1"/>
        <end position="648"/>
    </location>
</feature>
<feature type="domain" description="DM10 1" evidence="4">
    <location>
        <begin position="93"/>
        <end position="198"/>
    </location>
</feature>
<feature type="domain" description="DM10 2" evidence="4">
    <location>
        <begin position="239"/>
        <end position="359"/>
    </location>
</feature>
<feature type="domain" description="DM10 3" evidence="4">
    <location>
        <begin position="416"/>
        <end position="520"/>
    </location>
</feature>
<feature type="domain" description="EF-hand" evidence="3">
    <location>
        <begin position="582"/>
        <end position="617"/>
    </location>
</feature>
<feature type="region of interest" description="Required for its localization in the mitotic spindle and interaction with alpha-tubulin" evidence="2">
    <location>
        <begin position="1"/>
        <end position="45"/>
    </location>
</feature>
<proteinExistence type="evidence at protein level"/>
<comment type="function">
    <text evidence="2 5 7 8 9">Microtubule inner protein (MIP) part of the dynein-decorated doublet microtubules (DMTs) in cilia axoneme, which is required for motile cilia beating (PubMed:37295417, PubMed:37865089, PubMed:37989994). Microtubule-associated protein which regulates cell division and neuronal migration during cortical development (By similarity). Necessary for radial and tangential cell migration during brain development, possibly acting as a regulator of cell morphology and process formation during migration (By similarity). May enhance calcium influx through CACNA1E and stimulate programmed cell death (By similarity). Overexpression of EFHC1 in hippocampal primary culture neurons induced apoptosis (PubMed:15258581).</text>
</comment>
<comment type="subunit">
    <text evidence="2 7 8 9">Microtubule inner protein component of sperm flagellar doublet microtubules (PubMed:37295417, PubMed:37865089, PubMed:37989994). Interacts with the C-terminus of CACNA1E (By similarity). Interacts with alpha-tubulin (By similarity).</text>
</comment>
<comment type="subcellular location">
    <subcellularLocation>
        <location evidence="1">Cytoplasm</location>
        <location evidence="1">Cytoskeleton</location>
        <location evidence="1">Cilium axoneme</location>
    </subcellularLocation>
    <subcellularLocation>
        <location evidence="7 8 9">Cytoplasm</location>
        <location evidence="7 8 9">Cytoskeleton</location>
        <location evidence="7 8 9">Flagellum axoneme</location>
    </subcellularLocation>
    <subcellularLocation>
        <location evidence="2">Cytoplasm</location>
        <location evidence="2">Cytoskeleton</location>
        <location evidence="2">Microtubule organizing center</location>
        <location evidence="2">Centrosome</location>
    </subcellularLocation>
    <subcellularLocation>
        <location evidence="2">Cytoplasm</location>
        <location evidence="2">Cytoskeleton</location>
        <location evidence="2">Spindle</location>
    </subcellularLocation>
    <subcellularLocation>
        <location evidence="2">Cytoplasm</location>
        <location evidence="2">Cytoskeleton</location>
        <location evidence="2">Spindle pole</location>
    </subcellularLocation>
</comment>
<comment type="tissue specificity">
    <text evidence="5 6">Expressed in adult brain including hippocampus, cerebellum, cerebral cortex, thalamus, hypothalamus, amygdala and upper brainstem. Expressed in soma and dentrites of pyramidal neurons of the hippocampal CA1 region, pyramidal neurons of the cerebral cortex and Purkinje cells of cerebellum. Highly expressed in testis, trachea, and oviduct, moderately in lung, and slightly in brain. Highly expressed in sperm flagella and tracheal cilia (at protein level).</text>
</comment>
<reference key="1">
    <citation type="journal article" date="2005" name="Science">
        <title>The transcriptional landscape of the mammalian genome.</title>
        <authorList>
            <person name="Carninci P."/>
            <person name="Kasukawa T."/>
            <person name="Katayama S."/>
            <person name="Gough J."/>
            <person name="Frith M.C."/>
            <person name="Maeda N."/>
            <person name="Oyama R."/>
            <person name="Ravasi T."/>
            <person name="Lenhard B."/>
            <person name="Wells C."/>
            <person name="Kodzius R."/>
            <person name="Shimokawa K."/>
            <person name="Bajic V.B."/>
            <person name="Brenner S.E."/>
            <person name="Batalov S."/>
            <person name="Forrest A.R."/>
            <person name="Zavolan M."/>
            <person name="Davis M.J."/>
            <person name="Wilming L.G."/>
            <person name="Aidinis V."/>
            <person name="Allen J.E."/>
            <person name="Ambesi-Impiombato A."/>
            <person name="Apweiler R."/>
            <person name="Aturaliya R.N."/>
            <person name="Bailey T.L."/>
            <person name="Bansal M."/>
            <person name="Baxter L."/>
            <person name="Beisel K.W."/>
            <person name="Bersano T."/>
            <person name="Bono H."/>
            <person name="Chalk A.M."/>
            <person name="Chiu K.P."/>
            <person name="Choudhary V."/>
            <person name="Christoffels A."/>
            <person name="Clutterbuck D.R."/>
            <person name="Crowe M.L."/>
            <person name="Dalla E."/>
            <person name="Dalrymple B.P."/>
            <person name="de Bono B."/>
            <person name="Della Gatta G."/>
            <person name="di Bernardo D."/>
            <person name="Down T."/>
            <person name="Engstrom P."/>
            <person name="Fagiolini M."/>
            <person name="Faulkner G."/>
            <person name="Fletcher C.F."/>
            <person name="Fukushima T."/>
            <person name="Furuno M."/>
            <person name="Futaki S."/>
            <person name="Gariboldi M."/>
            <person name="Georgii-Hemming P."/>
            <person name="Gingeras T.R."/>
            <person name="Gojobori T."/>
            <person name="Green R.E."/>
            <person name="Gustincich S."/>
            <person name="Harbers M."/>
            <person name="Hayashi Y."/>
            <person name="Hensch T.K."/>
            <person name="Hirokawa N."/>
            <person name="Hill D."/>
            <person name="Huminiecki L."/>
            <person name="Iacono M."/>
            <person name="Ikeo K."/>
            <person name="Iwama A."/>
            <person name="Ishikawa T."/>
            <person name="Jakt M."/>
            <person name="Kanapin A."/>
            <person name="Katoh M."/>
            <person name="Kawasawa Y."/>
            <person name="Kelso J."/>
            <person name="Kitamura H."/>
            <person name="Kitano H."/>
            <person name="Kollias G."/>
            <person name="Krishnan S.P."/>
            <person name="Kruger A."/>
            <person name="Kummerfeld S.K."/>
            <person name="Kurochkin I.V."/>
            <person name="Lareau L.F."/>
            <person name="Lazarevic D."/>
            <person name="Lipovich L."/>
            <person name="Liu J."/>
            <person name="Liuni S."/>
            <person name="McWilliam S."/>
            <person name="Madan Babu M."/>
            <person name="Madera M."/>
            <person name="Marchionni L."/>
            <person name="Matsuda H."/>
            <person name="Matsuzawa S."/>
            <person name="Miki H."/>
            <person name="Mignone F."/>
            <person name="Miyake S."/>
            <person name="Morris K."/>
            <person name="Mottagui-Tabar S."/>
            <person name="Mulder N."/>
            <person name="Nakano N."/>
            <person name="Nakauchi H."/>
            <person name="Ng P."/>
            <person name="Nilsson R."/>
            <person name="Nishiguchi S."/>
            <person name="Nishikawa S."/>
            <person name="Nori F."/>
            <person name="Ohara O."/>
            <person name="Okazaki Y."/>
            <person name="Orlando V."/>
            <person name="Pang K.C."/>
            <person name="Pavan W.J."/>
            <person name="Pavesi G."/>
            <person name="Pesole G."/>
            <person name="Petrovsky N."/>
            <person name="Piazza S."/>
            <person name="Reed J."/>
            <person name="Reid J.F."/>
            <person name="Ring B.Z."/>
            <person name="Ringwald M."/>
            <person name="Rost B."/>
            <person name="Ruan Y."/>
            <person name="Salzberg S.L."/>
            <person name="Sandelin A."/>
            <person name="Schneider C."/>
            <person name="Schoenbach C."/>
            <person name="Sekiguchi K."/>
            <person name="Semple C.A."/>
            <person name="Seno S."/>
            <person name="Sessa L."/>
            <person name="Sheng Y."/>
            <person name="Shibata Y."/>
            <person name="Shimada H."/>
            <person name="Shimada K."/>
            <person name="Silva D."/>
            <person name="Sinclair B."/>
            <person name="Sperling S."/>
            <person name="Stupka E."/>
            <person name="Sugiura K."/>
            <person name="Sultana R."/>
            <person name="Takenaka Y."/>
            <person name="Taki K."/>
            <person name="Tammoja K."/>
            <person name="Tan S.L."/>
            <person name="Tang S."/>
            <person name="Taylor M.S."/>
            <person name="Tegner J."/>
            <person name="Teichmann S.A."/>
            <person name="Ueda H.R."/>
            <person name="van Nimwegen E."/>
            <person name="Verardo R."/>
            <person name="Wei C.L."/>
            <person name="Yagi K."/>
            <person name="Yamanishi H."/>
            <person name="Zabarovsky E."/>
            <person name="Zhu S."/>
            <person name="Zimmer A."/>
            <person name="Hide W."/>
            <person name="Bult C."/>
            <person name="Grimmond S.M."/>
            <person name="Teasdale R.D."/>
            <person name="Liu E.T."/>
            <person name="Brusic V."/>
            <person name="Quackenbush J."/>
            <person name="Wahlestedt C."/>
            <person name="Mattick J.S."/>
            <person name="Hume D.A."/>
            <person name="Kai C."/>
            <person name="Sasaki D."/>
            <person name="Tomaru Y."/>
            <person name="Fukuda S."/>
            <person name="Kanamori-Katayama M."/>
            <person name="Suzuki M."/>
            <person name="Aoki J."/>
            <person name="Arakawa T."/>
            <person name="Iida J."/>
            <person name="Imamura K."/>
            <person name="Itoh M."/>
            <person name="Kato T."/>
            <person name="Kawaji H."/>
            <person name="Kawagashira N."/>
            <person name="Kawashima T."/>
            <person name="Kojima M."/>
            <person name="Kondo S."/>
            <person name="Konno H."/>
            <person name="Nakano K."/>
            <person name="Ninomiya N."/>
            <person name="Nishio T."/>
            <person name="Okada M."/>
            <person name="Plessy C."/>
            <person name="Shibata K."/>
            <person name="Shiraki T."/>
            <person name="Suzuki S."/>
            <person name="Tagami M."/>
            <person name="Waki K."/>
            <person name="Watahiki A."/>
            <person name="Okamura-Oho Y."/>
            <person name="Suzuki H."/>
            <person name="Kawai J."/>
            <person name="Hayashizaki Y."/>
        </authorList>
    </citation>
    <scope>NUCLEOTIDE SEQUENCE [LARGE SCALE MRNA]</scope>
    <source>
        <strain>C57BL/6J</strain>
        <tissue>Testis</tissue>
    </source>
</reference>
<reference key="2">
    <citation type="journal article" date="2004" name="Nat. Genet.">
        <title>Mutations in EFHC1 cause juvenile myoclonic epilepsy.</title>
        <authorList>
            <person name="Suzuki T."/>
            <person name="Delgado-Escueta A.V."/>
            <person name="Aguan K."/>
            <person name="Alonso M.E."/>
            <person name="Shi J."/>
            <person name="Hara Y."/>
            <person name="Nishida M."/>
            <person name="Numata T."/>
            <person name="Medina M.T."/>
            <person name="Takeuchi T."/>
            <person name="Morita R."/>
            <person name="Bai D."/>
            <person name="Ganesh S."/>
            <person name="Sugimoto Y."/>
            <person name="Inazawa J."/>
            <person name="Bailey J.N."/>
            <person name="Ochoa A."/>
            <person name="Jara-Prado A."/>
            <person name="Rasmussen A."/>
            <person name="Ramos-Peek J."/>
            <person name="Cordova S."/>
            <person name="Rubio-Donnadieu F."/>
            <person name="Inoue Y."/>
            <person name="Osawa M."/>
            <person name="Kaneko S."/>
            <person name="Oguni H."/>
            <person name="Mori Y."/>
            <person name="Yamakawa K."/>
        </authorList>
    </citation>
    <scope>FUNCTION</scope>
    <scope>TISSUE SPECIFICITY</scope>
</reference>
<reference key="3">
    <citation type="journal article" date="2005" name="FEBS Lett.">
        <title>The mouse ortholog of EFHC1 implicated in juvenile myoclonic epilepsy is an axonemal protein widely conserved among organisms with motile cilia and flagella.</title>
        <authorList>
            <person name="Ikeda T."/>
            <person name="Ikeda K."/>
            <person name="Enomoto M."/>
            <person name="Park M.K."/>
            <person name="Hirono M."/>
            <person name="Kamiya R."/>
        </authorList>
    </citation>
    <scope>TISSUE SPECIFICITY</scope>
</reference>
<reference key="4">
    <citation type="journal article" date="2010" name="Cell">
        <title>A tissue-specific atlas of mouse protein phosphorylation and expression.</title>
        <authorList>
            <person name="Huttlin E.L."/>
            <person name="Jedrychowski M.P."/>
            <person name="Elias J.E."/>
            <person name="Goswami T."/>
            <person name="Rad R."/>
            <person name="Beausoleil S.A."/>
            <person name="Villen J."/>
            <person name="Haas W."/>
            <person name="Sowa M.E."/>
            <person name="Gygi S.P."/>
        </authorList>
    </citation>
    <scope>IDENTIFICATION BY MASS SPECTROMETRY [LARGE SCALE ANALYSIS]</scope>
    <source>
        <tissue>Testis</tissue>
    </source>
</reference>
<reference evidence="12" key="5">
    <citation type="journal article" date="2023" name="Cell">
        <title>Structures of sperm flagellar doublet microtubules expand the genetic spectrum of male infertility.</title>
        <authorList>
            <person name="Zhou L."/>
            <person name="Liu H."/>
            <person name="Liu S."/>
            <person name="Yang X."/>
            <person name="Dong Y."/>
            <person name="Pan Y."/>
            <person name="Xiao Z."/>
            <person name="Zheng B."/>
            <person name="Sun Y."/>
            <person name="Huang P."/>
            <person name="Zhang X."/>
            <person name="Hu J."/>
            <person name="Sun R."/>
            <person name="Feng S."/>
            <person name="Zhu Y."/>
            <person name="Liu M."/>
            <person name="Gui M."/>
            <person name="Wu J."/>
        </authorList>
    </citation>
    <scope>STRUCTURE BY ELECTRON MICROSCOPY (3.50 ANGSTROMS) OF SPERM FLAGELLAR DOUBLET MICROTUBULES</scope>
    <scope>FUNCTION</scope>
    <scope>SUBCELLULAR LOCATION</scope>
    <scope>SUBUNIT</scope>
</reference>
<reference evidence="13" key="6">
    <citation type="journal article" date="2023" name="Cell">
        <title>De novo protein identification in mammalian sperm using in situ cryoelectron tomography and AlphaFold2 docking.</title>
        <authorList>
            <person name="Chen Z."/>
            <person name="Shiozaki M."/>
            <person name="Haas K.M."/>
            <person name="Skinner W.M."/>
            <person name="Zhao S."/>
            <person name="Guo C."/>
            <person name="Polacco B.J."/>
            <person name="Yu Z."/>
            <person name="Krogan N.J."/>
            <person name="Lishko P.V."/>
            <person name="Kaake R.M."/>
            <person name="Vale R.D."/>
            <person name="Agard D.A."/>
        </authorList>
    </citation>
    <scope>STRUCTURE BY ELECTRON MICROSCOPY (7.70 ANGSTROMS) OF SPERM FLAGELLAR DOUBLET MICROTUBULES</scope>
    <scope>FUNCTION</scope>
    <scope>SUBCELLULAR LOCATION</scope>
    <scope>SUBUNIT</scope>
</reference>
<reference evidence="10 11" key="7">
    <citation type="journal article" date="2023" name="Cell Discov.">
        <title>In-cell structural insight into the stability of sperm microtubule doublet.</title>
        <authorList>
            <person name="Tai L."/>
            <person name="Yin G."/>
            <person name="Huang X."/>
            <person name="Sun F."/>
            <person name="Zhu Y."/>
        </authorList>
    </citation>
    <scope>STRUCTURE BY ELECTRON MICROSCOPY (4.50 ANGSTROMS)</scope>
    <scope>FUNCTION</scope>
    <scope>SUBUNIT</scope>
    <scope>SUBCELLULAR LOCATION</scope>
</reference>